<protein>
    <recommendedName>
        <fullName>CRISPR system Cms protein Csm4</fullName>
    </recommendedName>
    <alternativeName>
        <fullName>CRISPR type III-A associated RAMP protein Csm4</fullName>
    </alternativeName>
</protein>
<gene>
    <name type="primary">csm4</name>
    <name type="ordered locus">MT2887</name>
</gene>
<accession>P9WJF6</accession>
<accession>F2GLB4</accession>
<accession>L0TAR3</accession>
<accession>P71632</accession>
<accession>Q7D6I4</accession>
<organism>
    <name type="scientific">Mycobacterium tuberculosis (strain CDC 1551 / Oshkosh)</name>
    <dbReference type="NCBI Taxonomy" id="83331"/>
    <lineage>
        <taxon>Bacteria</taxon>
        <taxon>Bacillati</taxon>
        <taxon>Actinomycetota</taxon>
        <taxon>Actinomycetes</taxon>
        <taxon>Mycobacteriales</taxon>
        <taxon>Mycobacteriaceae</taxon>
        <taxon>Mycobacterium</taxon>
        <taxon>Mycobacterium tuberculosis complex</taxon>
    </lineage>
</organism>
<evidence type="ECO:0000250" key="1">
    <source>
        <dbReference type="UniProtKB" id="A0A0A7HGA1"/>
    </source>
</evidence>
<evidence type="ECO:0000250" key="2">
    <source>
        <dbReference type="UniProtKB" id="P9WJF7"/>
    </source>
</evidence>
<evidence type="ECO:0000305" key="3"/>
<dbReference type="EMBL" id="AE000516">
    <property type="protein sequence ID" value="AAK47212.1"/>
    <property type="molecule type" value="Genomic_DNA"/>
</dbReference>
<dbReference type="PIR" id="G70691">
    <property type="entry name" value="G70691"/>
</dbReference>
<dbReference type="RefSeq" id="WP_003414288.1">
    <property type="nucleotide sequence ID" value="NZ_KK341227.1"/>
</dbReference>
<dbReference type="SMR" id="P9WJF6"/>
<dbReference type="KEGG" id="mtc:MT2887"/>
<dbReference type="PATRIC" id="fig|83331.31.peg.3116"/>
<dbReference type="HOGENOM" id="CLU_062371_1_0_11"/>
<dbReference type="Proteomes" id="UP000001020">
    <property type="component" value="Chromosome"/>
</dbReference>
<dbReference type="GO" id="GO:0003723">
    <property type="term" value="F:RNA binding"/>
    <property type="evidence" value="ECO:0007669"/>
    <property type="project" value="UniProtKB-KW"/>
</dbReference>
<dbReference type="GO" id="GO:0051607">
    <property type="term" value="P:defense response to virus"/>
    <property type="evidence" value="ECO:0007669"/>
    <property type="project" value="UniProtKB-KW"/>
</dbReference>
<dbReference type="CDD" id="cd09663">
    <property type="entry name" value="Csm4_III-A"/>
    <property type="match status" value="1"/>
</dbReference>
<dbReference type="InterPro" id="IPR005510">
    <property type="entry name" value="Csm4"/>
</dbReference>
<dbReference type="InterPro" id="IPR040932">
    <property type="entry name" value="Csm4_C"/>
</dbReference>
<dbReference type="NCBIfam" id="TIGR01903">
    <property type="entry name" value="cas5_csm4"/>
    <property type="match status" value="1"/>
</dbReference>
<dbReference type="Pfam" id="PF17953">
    <property type="entry name" value="Csm4_C"/>
    <property type="match status" value="1"/>
</dbReference>
<feature type="chain" id="PRO_0000427838" description="CRISPR system Cms protein Csm4">
    <location>
        <begin position="1"/>
        <end position="302"/>
    </location>
</feature>
<reference key="1">
    <citation type="journal article" date="2002" name="J. Bacteriol.">
        <title>Whole-genome comparison of Mycobacterium tuberculosis clinical and laboratory strains.</title>
        <authorList>
            <person name="Fleischmann R.D."/>
            <person name="Alland D."/>
            <person name="Eisen J.A."/>
            <person name="Carpenter L."/>
            <person name="White O."/>
            <person name="Peterson J.D."/>
            <person name="DeBoy R.T."/>
            <person name="Dodson R.J."/>
            <person name="Gwinn M.L."/>
            <person name="Haft D.H."/>
            <person name="Hickey E.K."/>
            <person name="Kolonay J.F."/>
            <person name="Nelson W.C."/>
            <person name="Umayam L.A."/>
            <person name="Ermolaeva M.D."/>
            <person name="Salzberg S.L."/>
            <person name="Delcher A."/>
            <person name="Utterback T.R."/>
            <person name="Weidman J.F."/>
            <person name="Khouri H.M."/>
            <person name="Gill J."/>
            <person name="Mikula A."/>
            <person name="Bishai W."/>
            <person name="Jacobs W.R. Jr."/>
            <person name="Venter J.C."/>
            <person name="Fraser C.M."/>
        </authorList>
    </citation>
    <scope>NUCLEOTIDE SEQUENCE [LARGE SCALE GENOMIC DNA]</scope>
    <source>
        <strain>CDC 1551 / Oshkosh</strain>
    </source>
</reference>
<keyword id="KW-0051">Antiviral defense</keyword>
<keyword id="KW-1185">Reference proteome</keyword>
<keyword id="KW-0694">RNA-binding</keyword>
<comment type="function">
    <text evidence="1">CRISPR (clustered regularly interspaced short palindromic repeat) is an adaptive immune system that provides protection against mobile genetic elements (viruses, transposable elements and conjugative plasmids). CRISPR clusters contain spacers, sequences complementary to antecedent mobile elements, and target invading nucleic acids. CRISPR clusters are transcribed and processed into CRISPR RNA (crRNA). The type III-A Csm effector complex binds crRNA and acts as a crRNA-guided RNase, DNase and cyclic oligoadenylate synthase; binding of target RNA cognate to the crRNA is required for all activities.</text>
</comment>
<comment type="function">
    <text evidence="1">The subunit probably binds to the 5' handle of the crRNA, helping in discrimination between self- and non-self.</text>
</comment>
<comment type="subunit">
    <text evidence="2">Part of the Csm effector complex that includes Cas10, Csm2, Csm3, Csm4 and Csm5.</text>
</comment>
<comment type="miscellaneous">
    <text evidence="3">Encoded in a type III-A CRISPR locus.</text>
</comment>
<comment type="similarity">
    <text evidence="3">Belongs to the CRISPR-associated Csm4 family.</text>
</comment>
<name>CSM4_MYCTO</name>
<proteinExistence type="inferred from homology"/>
<sequence>MNSRLFRFDFDRTHFGDHGLESSTISCPADTLYSALCVEALRMGGQQLLGELVACSTLRLTDLLPYVGPDYLVPKPLHSVRSDGSSMQKKLAKKIGFLPAAQLGSFLDGTADLKELAARQTKIGVHAVSAKAAIHNGKKDADPYRVGYFRFELDAGLWLLATGSESELGLLTRLLKGISALGGERTSGFGAFNLTESEAPAALTPTVDAASLMTLTTSLPTDDELEAALAGATYRLVKRSGFVASSTYADMPLRKRDIYKFAAGSVFSRPFQGGILDVSLGGNHPVYSYARPLFLALPESAA</sequence>